<organism>
    <name type="scientific">Rhodopseudomonas palustris (strain HaA2)</name>
    <dbReference type="NCBI Taxonomy" id="316058"/>
    <lineage>
        <taxon>Bacteria</taxon>
        <taxon>Pseudomonadati</taxon>
        <taxon>Pseudomonadota</taxon>
        <taxon>Alphaproteobacteria</taxon>
        <taxon>Hyphomicrobiales</taxon>
        <taxon>Nitrobacteraceae</taxon>
        <taxon>Rhodopseudomonas</taxon>
    </lineage>
</organism>
<name>TRMB_RHOP2</name>
<dbReference type="EC" id="2.1.1.33" evidence="2"/>
<dbReference type="EMBL" id="CP000250">
    <property type="protein sequence ID" value="ABD05307.1"/>
    <property type="molecule type" value="Genomic_DNA"/>
</dbReference>
<dbReference type="SMR" id="Q2J2K3"/>
<dbReference type="STRING" id="316058.RPB_0596"/>
<dbReference type="KEGG" id="rpb:RPB_0596"/>
<dbReference type="eggNOG" id="COG0220">
    <property type="taxonomic scope" value="Bacteria"/>
</dbReference>
<dbReference type="HOGENOM" id="CLU_050910_0_3_5"/>
<dbReference type="OrthoDB" id="9802090at2"/>
<dbReference type="UniPathway" id="UPA00989"/>
<dbReference type="Proteomes" id="UP000008809">
    <property type="component" value="Chromosome"/>
</dbReference>
<dbReference type="GO" id="GO:0043527">
    <property type="term" value="C:tRNA methyltransferase complex"/>
    <property type="evidence" value="ECO:0007669"/>
    <property type="project" value="TreeGrafter"/>
</dbReference>
<dbReference type="GO" id="GO:0008176">
    <property type="term" value="F:tRNA (guanine(46)-N7)-methyltransferase activity"/>
    <property type="evidence" value="ECO:0007669"/>
    <property type="project" value="UniProtKB-UniRule"/>
</dbReference>
<dbReference type="Gene3D" id="3.40.50.150">
    <property type="entry name" value="Vaccinia Virus protein VP39"/>
    <property type="match status" value="1"/>
</dbReference>
<dbReference type="HAMAP" id="MF_01057">
    <property type="entry name" value="tRNA_methyltr_TrmB"/>
    <property type="match status" value="1"/>
</dbReference>
<dbReference type="InterPro" id="IPR029063">
    <property type="entry name" value="SAM-dependent_MTases_sf"/>
</dbReference>
<dbReference type="InterPro" id="IPR003358">
    <property type="entry name" value="tRNA_(Gua-N-7)_MeTrfase_Trmb"/>
</dbReference>
<dbReference type="InterPro" id="IPR055361">
    <property type="entry name" value="tRNA_methyltr_TrmB_bact"/>
</dbReference>
<dbReference type="PANTHER" id="PTHR23417">
    <property type="entry name" value="3-DEOXY-D-MANNO-OCTULOSONIC-ACID TRANSFERASE/TRNA GUANINE-N 7 - -METHYLTRANSFERASE"/>
    <property type="match status" value="1"/>
</dbReference>
<dbReference type="PANTHER" id="PTHR23417:SF14">
    <property type="entry name" value="PENTACOTRIPEPTIDE-REPEAT REGION OF PRORP DOMAIN-CONTAINING PROTEIN"/>
    <property type="match status" value="1"/>
</dbReference>
<dbReference type="Pfam" id="PF02390">
    <property type="entry name" value="Methyltransf_4"/>
    <property type="match status" value="1"/>
</dbReference>
<dbReference type="SUPFAM" id="SSF53335">
    <property type="entry name" value="S-adenosyl-L-methionine-dependent methyltransferases"/>
    <property type="match status" value="1"/>
</dbReference>
<dbReference type="PROSITE" id="PS51625">
    <property type="entry name" value="SAM_MT_TRMB"/>
    <property type="match status" value="1"/>
</dbReference>
<sequence length="256" mass="29241">MVTIDRRVQPIAHLACNHQRAFIDMNESVHHQGSFFGRRKGHKLRAHQADLVDKLLPHLALAIDGPAPASLVELFDPPVEAVRLEIGFGGGEHLIAEALAHPSTGFIGAEPYVNGMAKILARIEQENIRNIRLFAGDAAALMAWVPAHDLNRIDLIHPDPWPKRRHWKRRFVQDAMVGAMARALRANGEFRFVSDIDSYNAWTLAHLLRAPDFDWTAERADDWRKPWPNYTMTRYGRKAEREGRRAAYLRFRRRAA</sequence>
<protein>
    <recommendedName>
        <fullName evidence="2">tRNA (guanine-N(7)-)-methyltransferase</fullName>
        <ecNumber evidence="2">2.1.1.33</ecNumber>
    </recommendedName>
    <alternativeName>
        <fullName evidence="2">tRNA (guanine(46)-N(7))-methyltransferase</fullName>
    </alternativeName>
    <alternativeName>
        <fullName evidence="2">tRNA(m7G46)-methyltransferase</fullName>
    </alternativeName>
</protein>
<proteinExistence type="inferred from homology"/>
<feature type="chain" id="PRO_0000288216" description="tRNA (guanine-N(7)-)-methyltransferase">
    <location>
        <begin position="1"/>
        <end position="256"/>
    </location>
</feature>
<feature type="active site" evidence="1">
    <location>
        <position position="159"/>
    </location>
</feature>
<feature type="binding site" evidence="2">
    <location>
        <position position="85"/>
    </location>
    <ligand>
        <name>S-adenosyl-L-methionine</name>
        <dbReference type="ChEBI" id="CHEBI:59789"/>
    </ligand>
</feature>
<feature type="binding site" evidence="2">
    <location>
        <position position="110"/>
    </location>
    <ligand>
        <name>S-adenosyl-L-methionine</name>
        <dbReference type="ChEBI" id="CHEBI:59789"/>
    </ligand>
</feature>
<feature type="binding site" evidence="2">
    <location>
        <position position="137"/>
    </location>
    <ligand>
        <name>S-adenosyl-L-methionine</name>
        <dbReference type="ChEBI" id="CHEBI:59789"/>
    </ligand>
</feature>
<feature type="binding site" evidence="2">
    <location>
        <position position="159"/>
    </location>
    <ligand>
        <name>S-adenosyl-L-methionine</name>
        <dbReference type="ChEBI" id="CHEBI:59789"/>
    </ligand>
</feature>
<feature type="binding site" evidence="2">
    <location>
        <position position="163"/>
    </location>
    <ligand>
        <name>substrate</name>
    </ligand>
</feature>
<feature type="binding site" evidence="2">
    <location>
        <position position="195"/>
    </location>
    <ligand>
        <name>substrate</name>
    </ligand>
</feature>
<keyword id="KW-0489">Methyltransferase</keyword>
<keyword id="KW-1185">Reference proteome</keyword>
<keyword id="KW-0949">S-adenosyl-L-methionine</keyword>
<keyword id="KW-0808">Transferase</keyword>
<keyword id="KW-0819">tRNA processing</keyword>
<comment type="function">
    <text evidence="2">Catalyzes the formation of N(7)-methylguanine at position 46 (m7G46) in tRNA.</text>
</comment>
<comment type="catalytic activity">
    <reaction evidence="2">
        <text>guanosine(46) in tRNA + S-adenosyl-L-methionine = N(7)-methylguanosine(46) in tRNA + S-adenosyl-L-homocysteine</text>
        <dbReference type="Rhea" id="RHEA:42708"/>
        <dbReference type="Rhea" id="RHEA-COMP:10188"/>
        <dbReference type="Rhea" id="RHEA-COMP:10189"/>
        <dbReference type="ChEBI" id="CHEBI:57856"/>
        <dbReference type="ChEBI" id="CHEBI:59789"/>
        <dbReference type="ChEBI" id="CHEBI:74269"/>
        <dbReference type="ChEBI" id="CHEBI:74480"/>
        <dbReference type="EC" id="2.1.1.33"/>
    </reaction>
</comment>
<comment type="pathway">
    <text evidence="2">tRNA modification; N(7)-methylguanine-tRNA biosynthesis.</text>
</comment>
<comment type="similarity">
    <text evidence="2">Belongs to the class I-like SAM-binding methyltransferase superfamily. TrmB family.</text>
</comment>
<evidence type="ECO:0000250" key="1"/>
<evidence type="ECO:0000255" key="2">
    <source>
        <dbReference type="HAMAP-Rule" id="MF_01057"/>
    </source>
</evidence>
<accession>Q2J2K3</accession>
<gene>
    <name evidence="2" type="primary">trmB</name>
    <name type="ordered locus">RPB_0596</name>
</gene>
<reference key="1">
    <citation type="submission" date="2006-01" db="EMBL/GenBank/DDBJ databases">
        <title>Complete sequence of Rhodopseudomonas palustris HaA2.</title>
        <authorList>
            <consortium name="US DOE Joint Genome Institute"/>
            <person name="Copeland A."/>
            <person name="Lucas S."/>
            <person name="Lapidus A."/>
            <person name="Barry K."/>
            <person name="Detter J.C."/>
            <person name="Glavina T."/>
            <person name="Hammon N."/>
            <person name="Israni S."/>
            <person name="Pitluck S."/>
            <person name="Chain P."/>
            <person name="Malfatti S."/>
            <person name="Shin M."/>
            <person name="Vergez L."/>
            <person name="Schmutz J."/>
            <person name="Larimer F."/>
            <person name="Land M."/>
            <person name="Hauser L."/>
            <person name="Pelletier D.A."/>
            <person name="Kyrpides N."/>
            <person name="Anderson I."/>
            <person name="Oda Y."/>
            <person name="Harwood C.S."/>
            <person name="Richardson P."/>
        </authorList>
    </citation>
    <scope>NUCLEOTIDE SEQUENCE [LARGE SCALE GENOMIC DNA]</scope>
    <source>
        <strain>HaA2</strain>
    </source>
</reference>